<comment type="function">
    <text evidence="7">Proposed to enhance ubiquitin ligase activity of RING-type zinc finger-containing E3 ubiquitin-protein ligases. In vitro enhances ubiquitin ligase activity of TRIM28 and stimulates p53/TP53 ubiquitination in presence of Ubl-conjugating enzyme UBE2H leading to p53/TP53 degradation. Proposed to act through recruitment and/or stabilization of the Ubl-conjugating enzymes (E2) at the E3:substrate complex.</text>
</comment>
<comment type="subunit">
    <text evidence="6 7">Interacts with TRIM28 and UBE2H.</text>
</comment>
<comment type="interaction">
    <interactant intactId="EBI-5651487">
        <id>Q9UBF1</id>
    </interactant>
    <interactant intactId="EBI-1955541">
        <id>Q53GS7</id>
        <label>GLE1</label>
    </interactant>
    <organismsDiffer>false</organismsDiffer>
    <experiments>3</experiments>
</comment>
<comment type="interaction">
    <interactant intactId="EBI-5651487">
        <id>Q9UBF1</id>
    </interactant>
    <interactant intactId="EBI-10181968">
        <id>Q7Z4N8</id>
        <label>P4HA3</label>
    </interactant>
    <organismsDiffer>false</organismsDiffer>
    <experiments>4</experiments>
</comment>
<comment type="interaction">
    <interactant intactId="EBI-5651487">
        <id>Q9UBF1</id>
    </interactant>
    <interactant intactId="EBI-10244393">
        <id>Q5JS98</id>
        <label>PBX3</label>
    </interactant>
    <organismsDiffer>false</organismsDiffer>
    <experiments>3</experiments>
</comment>
<comment type="interaction">
    <interactant intactId="EBI-5651487">
        <id>Q9UBF1</id>
    </interactant>
    <interactant intactId="EBI-5235340">
        <id>Q7Z699</id>
        <label>SPRED1</label>
    </interactant>
    <organismsDiffer>false</organismsDiffer>
    <experiments>3</experiments>
</comment>
<comment type="interaction">
    <interactant intactId="EBI-5651487">
        <id>Q9UBF1</id>
    </interactant>
    <interactant intactId="EBI-10237585">
        <id>Q16384</id>
        <label>SSX1</label>
    </interactant>
    <organismsDiffer>false</organismsDiffer>
    <experiments>3</experiments>
</comment>
<comment type="interaction">
    <interactant intactId="EBI-5651487">
        <id>Q9UBF1</id>
    </interactant>
    <interactant intactId="EBI-2210673">
        <id>Q16385</id>
        <label>SSX2B</label>
    </interactant>
    <organismsDiffer>false</organismsDiffer>
    <experiments>3</experiments>
</comment>
<comment type="interaction">
    <interactant intactId="EBI-5651487">
        <id>Q9UBF1</id>
    </interactant>
    <interactant intactId="EBI-366083">
        <id>P04637</id>
        <label>TP53</label>
    </interactant>
    <organismsDiffer>false</organismsDiffer>
    <experiments>3</experiments>
</comment>
<comment type="interaction">
    <interactant intactId="EBI-5651487">
        <id>Q9UBF1</id>
    </interactant>
    <interactant intactId="EBI-78139">
        <id>Q13263</id>
        <label>TRIM28</label>
    </interactant>
    <organismsDiffer>false</organismsDiffer>
    <experiments>14</experiments>
</comment>
<comment type="interaction">
    <interactant intactId="EBI-5651487">
        <id>Q9UBF1</id>
    </interactant>
    <interactant intactId="EBI-12806590">
        <id>Q86WV8</id>
        <label>TSC1</label>
    </interactant>
    <organismsDiffer>false</organismsDiffer>
    <experiments>3</experiments>
</comment>
<comment type="interaction">
    <interactant intactId="EBI-5651487">
        <id>Q9UBF1</id>
    </interactant>
    <interactant intactId="EBI-2129909">
        <id>P62256</id>
        <label>UBE2H</label>
    </interactant>
    <organismsDiffer>false</organismsDiffer>
    <experiments>3</experiments>
</comment>
<comment type="interaction">
    <interactant intactId="EBI-5651487">
        <id>Q9UBF1</id>
    </interactant>
    <interactant intactId="EBI-1048893">
        <id>P54577</id>
        <label>YARS1</label>
    </interactant>
    <organismsDiffer>false</organismsDiffer>
    <experiments>3</experiments>
</comment>
<comment type="subcellular location">
    <subcellularLocation>
        <location evidence="4">Cytoplasm</location>
    </subcellularLocation>
    <subcellularLocation>
        <location evidence="4">Nucleus</location>
    </subcellularLocation>
    <text>Nuclear in germ cells. Cytoplasmic in well-differentiated hepatocellular carcinoma, nuclear in moderately- and poorly-differentiated hepatocellular carcinoma.</text>
</comment>
<comment type="tissue specificity">
    <text evidence="3 4">Not expressed in normal tissues, except in germ cells in the seminiferous tubules and in Purkinje cells of the cerebellum. Expressed in various tumors, including melanoma, lymphoma, as well as pancreatic cancer, mammary gland cancer, non-small cell lung cancer and liver cancer. In hepatocellular carcinoma, there is an inverse correlation between tumor differentiation and protein expression, i.e. the lower the differentiation, the higher percentage of expression.</text>
</comment>
<comment type="developmental stage">
    <text>Strongly expressed in spermatogonia and primary spermatocytes. At later stages of maturation, expression gradually decreases and becomes undetectable in mature spermatids.</text>
</comment>
<proteinExistence type="evidence at protein level"/>
<keyword id="KW-0963">Cytoplasm</keyword>
<keyword id="KW-0539">Nucleus</keyword>
<keyword id="KW-1267">Proteomics identification</keyword>
<keyword id="KW-1185">Reference proteome</keyword>
<keyword id="KW-0825">Tumor antigen</keyword>
<keyword id="KW-0833">Ubl conjugation pathway</keyword>
<reference key="1">
    <citation type="journal article" date="2000" name="Int. J. Cancer">
        <title>CT10: a new cancer-testis (CT) antigen homologous to CT7 and the MAGE family, identified by representational difference analysis.</title>
        <authorList>
            <person name="Gure A.O."/>
            <person name="Stockert E."/>
            <person name="Arden K.C."/>
            <person name="Boyer A.D."/>
            <person name="Viars C.S."/>
            <person name="Scanlan M.J."/>
            <person name="Old L.J."/>
            <person name="Chen Y.-T."/>
        </authorList>
    </citation>
    <scope>NUCLEOTIDE SEQUENCE [GENOMIC DNA / MRNA]</scope>
    <scope>IDENTIFICATION AS A CANCER/TESTIS ANTIGEN</scope>
</reference>
<reference key="2">
    <citation type="journal article" date="2000" name="Int. J. Cancer">
        <title>MAGE-B5, MAGE-B6, MAGE-C2, and MAGE-C3: four new members of the MAGE family with tumor-specific expression.</title>
        <authorList>
            <person name="Lucas S."/>
            <person name="De Plaen E."/>
            <person name="Boon T."/>
        </authorList>
    </citation>
    <scope>NUCLEOTIDE SEQUENCE [GENOMIC DNA / MRNA]</scope>
</reference>
<reference key="3">
    <citation type="journal article" date="2002" name="J. Immunol.">
        <title>Large scale identification of human hepatocellular carcinoma-associated antigens by autoantibodies.</title>
        <authorList>
            <person name="Wang Y."/>
            <person name="Han K.-J."/>
            <person name="Pang X.-W."/>
            <person name="Vaughan H.A."/>
            <person name="Qu W."/>
            <person name="Dong X.-Y."/>
            <person name="Peng J.-R."/>
            <person name="Zhao H.-T."/>
            <person name="Rui J.-A."/>
            <person name="Leng X.-S."/>
            <person name="Cebon J."/>
            <person name="Burgess A.W."/>
            <person name="Chen W.-F."/>
        </authorList>
    </citation>
    <scope>NUCLEOTIDE SEQUENCE [GENOMIC DNA / MRNA]</scope>
    <scope>TISSUE SPECIFICITY</scope>
    <scope>IDENTIFICATION AS A CANCER/TESTIS ANTIGEN</scope>
    <source>
        <tissue>Hepatoma</tissue>
    </source>
</reference>
<reference key="4">
    <citation type="journal article" date="2005" name="Nature">
        <title>The DNA sequence of the human X chromosome.</title>
        <authorList>
            <person name="Ross M.T."/>
            <person name="Grafham D.V."/>
            <person name="Coffey A.J."/>
            <person name="Scherer S."/>
            <person name="McLay K."/>
            <person name="Muzny D."/>
            <person name="Platzer M."/>
            <person name="Howell G.R."/>
            <person name="Burrows C."/>
            <person name="Bird C.P."/>
            <person name="Frankish A."/>
            <person name="Lovell F.L."/>
            <person name="Howe K.L."/>
            <person name="Ashurst J.L."/>
            <person name="Fulton R.S."/>
            <person name="Sudbrak R."/>
            <person name="Wen G."/>
            <person name="Jones M.C."/>
            <person name="Hurles M.E."/>
            <person name="Andrews T.D."/>
            <person name="Scott C.E."/>
            <person name="Searle S."/>
            <person name="Ramser J."/>
            <person name="Whittaker A."/>
            <person name="Deadman R."/>
            <person name="Carter N.P."/>
            <person name="Hunt S.E."/>
            <person name="Chen R."/>
            <person name="Cree A."/>
            <person name="Gunaratne P."/>
            <person name="Havlak P."/>
            <person name="Hodgson A."/>
            <person name="Metzker M.L."/>
            <person name="Richards S."/>
            <person name="Scott G."/>
            <person name="Steffen D."/>
            <person name="Sodergren E."/>
            <person name="Wheeler D.A."/>
            <person name="Worley K.C."/>
            <person name="Ainscough R."/>
            <person name="Ambrose K.D."/>
            <person name="Ansari-Lari M.A."/>
            <person name="Aradhya S."/>
            <person name="Ashwell R.I."/>
            <person name="Babbage A.K."/>
            <person name="Bagguley C.L."/>
            <person name="Ballabio A."/>
            <person name="Banerjee R."/>
            <person name="Barker G.E."/>
            <person name="Barlow K.F."/>
            <person name="Barrett I.P."/>
            <person name="Bates K.N."/>
            <person name="Beare D.M."/>
            <person name="Beasley H."/>
            <person name="Beasley O."/>
            <person name="Beck A."/>
            <person name="Bethel G."/>
            <person name="Blechschmidt K."/>
            <person name="Brady N."/>
            <person name="Bray-Allen S."/>
            <person name="Bridgeman A.M."/>
            <person name="Brown A.J."/>
            <person name="Brown M.J."/>
            <person name="Bonnin D."/>
            <person name="Bruford E.A."/>
            <person name="Buhay C."/>
            <person name="Burch P."/>
            <person name="Burford D."/>
            <person name="Burgess J."/>
            <person name="Burrill W."/>
            <person name="Burton J."/>
            <person name="Bye J.M."/>
            <person name="Carder C."/>
            <person name="Carrel L."/>
            <person name="Chako J."/>
            <person name="Chapman J.C."/>
            <person name="Chavez D."/>
            <person name="Chen E."/>
            <person name="Chen G."/>
            <person name="Chen Y."/>
            <person name="Chen Z."/>
            <person name="Chinault C."/>
            <person name="Ciccodicola A."/>
            <person name="Clark S.Y."/>
            <person name="Clarke G."/>
            <person name="Clee C.M."/>
            <person name="Clegg S."/>
            <person name="Clerc-Blankenburg K."/>
            <person name="Clifford K."/>
            <person name="Cobley V."/>
            <person name="Cole C.G."/>
            <person name="Conquer J.S."/>
            <person name="Corby N."/>
            <person name="Connor R.E."/>
            <person name="David R."/>
            <person name="Davies J."/>
            <person name="Davis C."/>
            <person name="Davis J."/>
            <person name="Delgado O."/>
            <person name="Deshazo D."/>
            <person name="Dhami P."/>
            <person name="Ding Y."/>
            <person name="Dinh H."/>
            <person name="Dodsworth S."/>
            <person name="Draper H."/>
            <person name="Dugan-Rocha S."/>
            <person name="Dunham A."/>
            <person name="Dunn M."/>
            <person name="Durbin K.J."/>
            <person name="Dutta I."/>
            <person name="Eades T."/>
            <person name="Ellwood M."/>
            <person name="Emery-Cohen A."/>
            <person name="Errington H."/>
            <person name="Evans K.L."/>
            <person name="Faulkner L."/>
            <person name="Francis F."/>
            <person name="Frankland J."/>
            <person name="Fraser A.E."/>
            <person name="Galgoczy P."/>
            <person name="Gilbert J."/>
            <person name="Gill R."/>
            <person name="Gloeckner G."/>
            <person name="Gregory S.G."/>
            <person name="Gribble S."/>
            <person name="Griffiths C."/>
            <person name="Grocock R."/>
            <person name="Gu Y."/>
            <person name="Gwilliam R."/>
            <person name="Hamilton C."/>
            <person name="Hart E.A."/>
            <person name="Hawes A."/>
            <person name="Heath P.D."/>
            <person name="Heitmann K."/>
            <person name="Hennig S."/>
            <person name="Hernandez J."/>
            <person name="Hinzmann B."/>
            <person name="Ho S."/>
            <person name="Hoffs M."/>
            <person name="Howden P.J."/>
            <person name="Huckle E.J."/>
            <person name="Hume J."/>
            <person name="Hunt P.J."/>
            <person name="Hunt A.R."/>
            <person name="Isherwood J."/>
            <person name="Jacob L."/>
            <person name="Johnson D."/>
            <person name="Jones S."/>
            <person name="de Jong P.J."/>
            <person name="Joseph S.S."/>
            <person name="Keenan S."/>
            <person name="Kelly S."/>
            <person name="Kershaw J.K."/>
            <person name="Khan Z."/>
            <person name="Kioschis P."/>
            <person name="Klages S."/>
            <person name="Knights A.J."/>
            <person name="Kosiura A."/>
            <person name="Kovar-Smith C."/>
            <person name="Laird G.K."/>
            <person name="Langford C."/>
            <person name="Lawlor S."/>
            <person name="Leversha M."/>
            <person name="Lewis L."/>
            <person name="Liu W."/>
            <person name="Lloyd C."/>
            <person name="Lloyd D.M."/>
            <person name="Loulseged H."/>
            <person name="Loveland J.E."/>
            <person name="Lovell J.D."/>
            <person name="Lozado R."/>
            <person name="Lu J."/>
            <person name="Lyne R."/>
            <person name="Ma J."/>
            <person name="Maheshwari M."/>
            <person name="Matthews L.H."/>
            <person name="McDowall J."/>
            <person name="McLaren S."/>
            <person name="McMurray A."/>
            <person name="Meidl P."/>
            <person name="Meitinger T."/>
            <person name="Milne S."/>
            <person name="Miner G."/>
            <person name="Mistry S.L."/>
            <person name="Morgan M."/>
            <person name="Morris S."/>
            <person name="Mueller I."/>
            <person name="Mullikin J.C."/>
            <person name="Nguyen N."/>
            <person name="Nordsiek G."/>
            <person name="Nyakatura G."/>
            <person name="O'dell C.N."/>
            <person name="Okwuonu G."/>
            <person name="Palmer S."/>
            <person name="Pandian R."/>
            <person name="Parker D."/>
            <person name="Parrish J."/>
            <person name="Pasternak S."/>
            <person name="Patel D."/>
            <person name="Pearce A.V."/>
            <person name="Pearson D.M."/>
            <person name="Pelan S.E."/>
            <person name="Perez L."/>
            <person name="Porter K.M."/>
            <person name="Ramsey Y."/>
            <person name="Reichwald K."/>
            <person name="Rhodes S."/>
            <person name="Ridler K.A."/>
            <person name="Schlessinger D."/>
            <person name="Schueler M.G."/>
            <person name="Sehra H.K."/>
            <person name="Shaw-Smith C."/>
            <person name="Shen H."/>
            <person name="Sheridan E.M."/>
            <person name="Shownkeen R."/>
            <person name="Skuce C.D."/>
            <person name="Smith M.L."/>
            <person name="Sotheran E.C."/>
            <person name="Steingruber H.E."/>
            <person name="Steward C.A."/>
            <person name="Storey R."/>
            <person name="Swann R.M."/>
            <person name="Swarbreck D."/>
            <person name="Tabor P.E."/>
            <person name="Taudien S."/>
            <person name="Taylor T."/>
            <person name="Teague B."/>
            <person name="Thomas K."/>
            <person name="Thorpe A."/>
            <person name="Timms K."/>
            <person name="Tracey A."/>
            <person name="Trevanion S."/>
            <person name="Tromans A.C."/>
            <person name="d'Urso M."/>
            <person name="Verduzco D."/>
            <person name="Villasana D."/>
            <person name="Waldron L."/>
            <person name="Wall M."/>
            <person name="Wang Q."/>
            <person name="Warren J."/>
            <person name="Warry G.L."/>
            <person name="Wei X."/>
            <person name="West A."/>
            <person name="Whitehead S.L."/>
            <person name="Whiteley M.N."/>
            <person name="Wilkinson J.E."/>
            <person name="Willey D.L."/>
            <person name="Williams G."/>
            <person name="Williams L."/>
            <person name="Williamson A."/>
            <person name="Williamson H."/>
            <person name="Wilming L."/>
            <person name="Woodmansey R.L."/>
            <person name="Wray P.W."/>
            <person name="Yen J."/>
            <person name="Zhang J."/>
            <person name="Zhou J."/>
            <person name="Zoghbi H."/>
            <person name="Zorilla S."/>
            <person name="Buck D."/>
            <person name="Reinhardt R."/>
            <person name="Poustka A."/>
            <person name="Rosenthal A."/>
            <person name="Lehrach H."/>
            <person name="Meindl A."/>
            <person name="Minx P.J."/>
            <person name="Hillier L.W."/>
            <person name="Willard H.F."/>
            <person name="Wilson R.K."/>
            <person name="Waterston R.H."/>
            <person name="Rice C.M."/>
            <person name="Vaudin M."/>
            <person name="Coulson A."/>
            <person name="Nelson D.L."/>
            <person name="Weinstock G."/>
            <person name="Sulston J.E."/>
            <person name="Durbin R.M."/>
            <person name="Hubbard T."/>
            <person name="Gibbs R.A."/>
            <person name="Beck S."/>
            <person name="Rogers J."/>
            <person name="Bentley D.R."/>
        </authorList>
    </citation>
    <scope>NUCLEOTIDE SEQUENCE [LARGE SCALE GENOMIC DNA]</scope>
</reference>
<reference key="5">
    <citation type="journal article" date="2004" name="Genome Res.">
        <title>The status, quality, and expansion of the NIH full-length cDNA project: the Mammalian Gene Collection (MGC).</title>
        <authorList>
            <consortium name="The MGC Project Team"/>
        </authorList>
    </citation>
    <scope>NUCLEOTIDE SEQUENCE [LARGE SCALE MRNA]</scope>
    <source>
        <tissue>Chronic myeloid leukemia cell</tissue>
        <tissue>Melanoma</tissue>
    </source>
</reference>
<reference key="6">
    <citation type="journal article" date="2003" name="Lab. Invest.">
        <title>HCA587 antigen expression in normal tissues and cancers: correlation with tumor differentiation in hepatocellular carcinoma.</title>
        <authorList>
            <person name="Li B."/>
            <person name="Qian X.-P."/>
            <person name="Pang X.-W."/>
            <person name="Zou W.-Z."/>
            <person name="Wang Y.-P."/>
            <person name="Wu H.-Y."/>
            <person name="Chen W.-F."/>
        </authorList>
    </citation>
    <scope>SUBCELLULAR LOCATION</scope>
    <scope>TISSUE SPECIFICITY</scope>
</reference>
<reference key="7">
    <citation type="journal article" date="2007" name="Cancer Res.">
        <title>MAGE-A, mMage-b, and MAGE-C proteins form complexes with KAP1 and suppress p53-dependent apoptosis in MAGE-positive cell lines.</title>
        <authorList>
            <person name="Yang B."/>
            <person name="O'Herrin S.M."/>
            <person name="Wu J."/>
            <person name="Reagan-Shaw S."/>
            <person name="Ma Y."/>
            <person name="Bhat K.M."/>
            <person name="Gravekamp C."/>
            <person name="Setaluri V."/>
            <person name="Peters N."/>
            <person name="Hoffmann F.M."/>
            <person name="Peng H."/>
            <person name="Ivanov A.V."/>
            <person name="Simpson A.J."/>
            <person name="Longley B.J."/>
        </authorList>
    </citation>
    <scope>INTERACTION WITH TRIM28</scope>
</reference>
<reference key="8">
    <citation type="journal article" date="2010" name="Mol. Cell">
        <title>MAGE-RING protein complexes comprise a family of E3 ubiquitin ligases.</title>
        <authorList>
            <person name="Doyle J.M."/>
            <person name="Gao J."/>
            <person name="Wang J."/>
            <person name="Yang M."/>
            <person name="Potts P.R."/>
        </authorList>
    </citation>
    <scope>FUNCTION</scope>
    <scope>INTERACTION WITH TRIM28 AND UBE2H</scope>
    <scope>MUTAGENESIS OF 152-LEU-LEU-153</scope>
</reference>
<reference key="9">
    <citation type="journal article" date="2011" name="BMC Syst. Biol.">
        <title>Initial characterization of the human central proteome.</title>
        <authorList>
            <person name="Burkard T.R."/>
            <person name="Planyavsky M."/>
            <person name="Kaupe I."/>
            <person name="Breitwieser F.P."/>
            <person name="Buerckstuemmer T."/>
            <person name="Bennett K.L."/>
            <person name="Superti-Furga G."/>
            <person name="Colinge J."/>
        </authorList>
    </citation>
    <scope>IDENTIFICATION BY MASS SPECTROMETRY [LARGE SCALE ANALYSIS]</scope>
</reference>
<reference key="10">
    <citation type="journal article" date="2013" name="J. Proteome Res.">
        <title>Toward a comprehensive characterization of a human cancer cell phosphoproteome.</title>
        <authorList>
            <person name="Zhou H."/>
            <person name="Di Palma S."/>
            <person name="Preisinger C."/>
            <person name="Peng M."/>
            <person name="Polat A.N."/>
            <person name="Heck A.J."/>
            <person name="Mohammed S."/>
        </authorList>
    </citation>
    <scope>IDENTIFICATION BY MASS SPECTROMETRY [LARGE SCALE ANALYSIS]</scope>
    <source>
        <tissue>Erythroleukemia</tissue>
    </source>
</reference>
<reference key="11">
    <citation type="journal article" date="2006" name="Science">
        <title>The consensus coding sequences of human breast and colorectal cancers.</title>
        <authorList>
            <person name="Sjoeblom T."/>
            <person name="Jones S."/>
            <person name="Wood L.D."/>
            <person name="Parsons D.W."/>
            <person name="Lin J."/>
            <person name="Barber T.D."/>
            <person name="Mandelker D."/>
            <person name="Leary R.J."/>
            <person name="Ptak J."/>
            <person name="Silliman N."/>
            <person name="Szabo S."/>
            <person name="Buckhaults P."/>
            <person name="Farrell C."/>
            <person name="Meeh P."/>
            <person name="Markowitz S.D."/>
            <person name="Willis J."/>
            <person name="Dawson D."/>
            <person name="Willson J.K.V."/>
            <person name="Gazdar A.F."/>
            <person name="Hartigan J."/>
            <person name="Wu L."/>
            <person name="Liu C."/>
            <person name="Parmigiani G."/>
            <person name="Park B.H."/>
            <person name="Bachman K.E."/>
            <person name="Papadopoulos N."/>
            <person name="Vogelstein B."/>
            <person name="Kinzler K.W."/>
            <person name="Velculescu V.E."/>
        </authorList>
    </citation>
    <scope>VARIANT [LARGE SCALE ANALYSIS] CYS-6</scope>
</reference>
<sequence>MPPVPGVPFRNVDNDSPTSVELEDWVDAQHPTDEEEEEASSASSTLYLVFSPSSFSTSSSLILGGPEEEEVPSGVIPNLTESIPSSPPQGPPQGPSQSPLSSCCSSFSWSSFSEESSSQKGEDTGTCQGLPDSESSFTYTLDEKVAELVEFLLLKYEAEEPVTEAEMLMIVIKYKDYFPVILKRAREFMELLFGLALIEVGPDHFCVFANTVGLTDEGSDDEGMPENSLLIIILSVIFIKGNCASEEVIWEVLNAVGVYAGREHFVYGEPRELLTKVWVQGHYLEYREVPHSSPPYYEFLWGPRAHSESIKKKVLEFLAKLNNTVPSSFPSWYKDALKDVEERVQATIDTADDATVMASESLSVMSSNVSFSE</sequence>
<accession>Q9UBF1</accession>
<accession>Q5JZ00</accession>
<accession>Q96D45</accession>
<accession>Q9P1M6</accession>
<accession>Q9P1M7</accession>
<gene>
    <name type="primary">MAGEC2</name>
    <name type="synonym">HCA587</name>
    <name type="synonym">MAGEE1</name>
</gene>
<organism>
    <name type="scientific">Homo sapiens</name>
    <name type="common">Human</name>
    <dbReference type="NCBI Taxonomy" id="9606"/>
    <lineage>
        <taxon>Eukaryota</taxon>
        <taxon>Metazoa</taxon>
        <taxon>Chordata</taxon>
        <taxon>Craniata</taxon>
        <taxon>Vertebrata</taxon>
        <taxon>Euteleostomi</taxon>
        <taxon>Mammalia</taxon>
        <taxon>Eutheria</taxon>
        <taxon>Euarchontoglires</taxon>
        <taxon>Primates</taxon>
        <taxon>Haplorrhini</taxon>
        <taxon>Catarrhini</taxon>
        <taxon>Hominidae</taxon>
        <taxon>Homo</taxon>
    </lineage>
</organism>
<protein>
    <recommendedName>
        <fullName>Melanoma-associated antigen C2</fullName>
    </recommendedName>
    <alternativeName>
        <fullName>Cancer/testis antigen 10</fullName>
        <shortName>CT10</shortName>
    </alternativeName>
    <alternativeName>
        <fullName>Hepatocellular carcinoma-associated antigen 587</fullName>
    </alternativeName>
    <alternativeName>
        <fullName>MAGE-C2 antigen</fullName>
    </alternativeName>
    <alternativeName>
        <fullName>MAGE-E1 antigen</fullName>
    </alternativeName>
</protein>
<evidence type="ECO:0000255" key="1">
    <source>
        <dbReference type="PROSITE-ProRule" id="PRU00127"/>
    </source>
</evidence>
<evidence type="ECO:0000256" key="2">
    <source>
        <dbReference type="SAM" id="MobiDB-lite"/>
    </source>
</evidence>
<evidence type="ECO:0000269" key="3">
    <source>
    </source>
</evidence>
<evidence type="ECO:0000269" key="4">
    <source>
    </source>
</evidence>
<evidence type="ECO:0000269" key="5">
    <source>
    </source>
</evidence>
<evidence type="ECO:0000269" key="6">
    <source>
    </source>
</evidence>
<evidence type="ECO:0000269" key="7">
    <source>
    </source>
</evidence>
<evidence type="ECO:0000305" key="8"/>
<dbReference type="EMBL" id="AF116194">
    <property type="protein sequence ID" value="AAF34816.1"/>
    <property type="molecule type" value="mRNA"/>
</dbReference>
<dbReference type="EMBL" id="AF116195">
    <property type="protein sequence ID" value="AAF34817.1"/>
    <property type="molecule type" value="Genomic_DNA"/>
</dbReference>
<dbReference type="EMBL" id="AF196482">
    <property type="protein sequence ID" value="AAF07210.1"/>
    <property type="molecule type" value="mRNA"/>
</dbReference>
<dbReference type="EMBL" id="AF196483">
    <property type="protein sequence ID" value="AAF07211.1"/>
    <property type="molecule type" value="Genomic_DNA"/>
</dbReference>
<dbReference type="EMBL" id="AF151378">
    <property type="protein sequence ID" value="AAF36533.1"/>
    <property type="molecule type" value="mRNA"/>
</dbReference>
<dbReference type="EMBL" id="AF239802">
    <property type="protein sequence ID" value="AAK15073.1"/>
    <property type="molecule type" value="Genomic_DNA"/>
</dbReference>
<dbReference type="EMBL" id="AL031073">
    <property type="status" value="NOT_ANNOTATED_CDS"/>
    <property type="molecule type" value="Genomic_DNA"/>
</dbReference>
<dbReference type="EMBL" id="BC005891">
    <property type="protein sequence ID" value="AAH05891.1"/>
    <property type="molecule type" value="mRNA"/>
</dbReference>
<dbReference type="EMBL" id="BC013318">
    <property type="protein sequence ID" value="AAH13318.1"/>
    <property type="molecule type" value="mRNA"/>
</dbReference>
<dbReference type="CCDS" id="CCDS14678.1"/>
<dbReference type="RefSeq" id="NP_057333.1">
    <property type="nucleotide sequence ID" value="NM_016249.4"/>
</dbReference>
<dbReference type="SMR" id="Q9UBF1"/>
<dbReference type="BioGRID" id="119540">
    <property type="interactions" value="30"/>
</dbReference>
<dbReference type="CORUM" id="Q9UBF1"/>
<dbReference type="FunCoup" id="Q9UBF1">
    <property type="interactions" value="109"/>
</dbReference>
<dbReference type="IntAct" id="Q9UBF1">
    <property type="interactions" value="15"/>
</dbReference>
<dbReference type="MINT" id="Q9UBF1"/>
<dbReference type="STRING" id="9606.ENSP00000354660"/>
<dbReference type="iPTMnet" id="Q9UBF1"/>
<dbReference type="PhosphoSitePlus" id="Q9UBF1"/>
<dbReference type="BioMuta" id="MAGEC2"/>
<dbReference type="DMDM" id="17380150"/>
<dbReference type="MassIVE" id="Q9UBF1"/>
<dbReference type="PaxDb" id="9606-ENSP00000354660"/>
<dbReference type="PeptideAtlas" id="Q9UBF1"/>
<dbReference type="ProteomicsDB" id="83954"/>
<dbReference type="Pumba" id="Q9UBF1"/>
<dbReference type="Antibodypedia" id="30560">
    <property type="antibodies" value="158 antibodies from 25 providers"/>
</dbReference>
<dbReference type="DNASU" id="51438"/>
<dbReference type="Ensembl" id="ENST00000247452.4">
    <property type="protein sequence ID" value="ENSP00000354660.2"/>
    <property type="gene ID" value="ENSG00000046774.10"/>
</dbReference>
<dbReference type="GeneID" id="51438"/>
<dbReference type="KEGG" id="hsa:51438"/>
<dbReference type="MANE-Select" id="ENST00000247452.4">
    <property type="protein sequence ID" value="ENSP00000354660.2"/>
    <property type="RefSeq nucleotide sequence ID" value="NM_016249.4"/>
    <property type="RefSeq protein sequence ID" value="NP_057333.1"/>
</dbReference>
<dbReference type="UCSC" id="uc004fbu.3">
    <property type="organism name" value="human"/>
</dbReference>
<dbReference type="AGR" id="HGNC:13574"/>
<dbReference type="CTD" id="51438"/>
<dbReference type="DisGeNET" id="51438"/>
<dbReference type="GeneCards" id="MAGEC2"/>
<dbReference type="HGNC" id="HGNC:13574">
    <property type="gene designation" value="MAGEC2"/>
</dbReference>
<dbReference type="HPA" id="ENSG00000046774">
    <property type="expression patterns" value="Tissue enriched (testis)"/>
</dbReference>
<dbReference type="MIM" id="300468">
    <property type="type" value="gene"/>
</dbReference>
<dbReference type="neXtProt" id="NX_Q9UBF1"/>
<dbReference type="OpenTargets" id="ENSG00000046774"/>
<dbReference type="PharmGKB" id="PA134954317"/>
<dbReference type="VEuPathDB" id="HostDB:ENSG00000046774"/>
<dbReference type="eggNOG" id="KOG4562">
    <property type="taxonomic scope" value="Eukaryota"/>
</dbReference>
<dbReference type="GeneTree" id="ENSGT00940000164535"/>
<dbReference type="HOGENOM" id="CLU_039582_1_1_1"/>
<dbReference type="InParanoid" id="Q9UBF1"/>
<dbReference type="OMA" id="QGHYLEY"/>
<dbReference type="OrthoDB" id="205198at2759"/>
<dbReference type="PAN-GO" id="Q9UBF1">
    <property type="GO annotations" value="2 GO annotations based on evolutionary models"/>
</dbReference>
<dbReference type="PhylomeDB" id="Q9UBF1"/>
<dbReference type="TreeFam" id="TF328505"/>
<dbReference type="PathwayCommons" id="Q9UBF1"/>
<dbReference type="SignaLink" id="Q9UBF1"/>
<dbReference type="SIGNOR" id="Q9UBF1"/>
<dbReference type="BioGRID-ORCS" id="51438">
    <property type="hits" value="12 hits in 778 CRISPR screens"/>
</dbReference>
<dbReference type="GeneWiki" id="MAGEC2"/>
<dbReference type="GenomeRNAi" id="51438"/>
<dbReference type="Pharos" id="Q9UBF1">
    <property type="development level" value="Tbio"/>
</dbReference>
<dbReference type="PRO" id="PR:Q9UBF1"/>
<dbReference type="Proteomes" id="UP000005640">
    <property type="component" value="Chromosome X"/>
</dbReference>
<dbReference type="RNAct" id="Q9UBF1">
    <property type="molecule type" value="protein"/>
</dbReference>
<dbReference type="Bgee" id="ENSG00000046774">
    <property type="expression patterns" value="Expressed in male germ line stem cell (sensu Vertebrata) in testis and 30 other cell types or tissues"/>
</dbReference>
<dbReference type="GO" id="GO:0005829">
    <property type="term" value="C:cytosol"/>
    <property type="evidence" value="ECO:0000314"/>
    <property type="project" value="HPA"/>
</dbReference>
<dbReference type="GO" id="GO:0005654">
    <property type="term" value="C:nucleoplasm"/>
    <property type="evidence" value="ECO:0000314"/>
    <property type="project" value="HPA"/>
</dbReference>
<dbReference type="GO" id="GO:0005634">
    <property type="term" value="C:nucleus"/>
    <property type="evidence" value="ECO:0000318"/>
    <property type="project" value="GO_Central"/>
</dbReference>
<dbReference type="GO" id="GO:0031625">
    <property type="term" value="F:ubiquitin protein ligase binding"/>
    <property type="evidence" value="ECO:0000314"/>
    <property type="project" value="UniProtKB"/>
</dbReference>
<dbReference type="GO" id="GO:0000122">
    <property type="term" value="P:negative regulation of transcription by RNA polymerase II"/>
    <property type="evidence" value="ECO:0000318"/>
    <property type="project" value="GO_Central"/>
</dbReference>
<dbReference type="GO" id="GO:0051443">
    <property type="term" value="P:positive regulation of ubiquitin-protein transferase activity"/>
    <property type="evidence" value="ECO:0000315"/>
    <property type="project" value="UniProtKB"/>
</dbReference>
<dbReference type="GO" id="GO:0030163">
    <property type="term" value="P:protein catabolic process"/>
    <property type="evidence" value="ECO:0000315"/>
    <property type="project" value="UniProtKB"/>
</dbReference>
<dbReference type="FunFam" id="1.10.10.1200:FF:000007">
    <property type="entry name" value="Melanoma-associated antigen C2"/>
    <property type="match status" value="1"/>
</dbReference>
<dbReference type="FunFam" id="1.10.10.1210:FF:000001">
    <property type="entry name" value="melanoma-associated antigen D1"/>
    <property type="match status" value="1"/>
</dbReference>
<dbReference type="Gene3D" id="1.10.10.1200">
    <property type="entry name" value="MAGE homology domain, winged helix WH1 motif"/>
    <property type="match status" value="1"/>
</dbReference>
<dbReference type="Gene3D" id="1.10.10.1210">
    <property type="entry name" value="MAGE homology domain, winged helix WH2 motif"/>
    <property type="match status" value="1"/>
</dbReference>
<dbReference type="InterPro" id="IPR037445">
    <property type="entry name" value="MAGE"/>
</dbReference>
<dbReference type="InterPro" id="IPR041898">
    <property type="entry name" value="MAGE_WH1"/>
</dbReference>
<dbReference type="InterPro" id="IPR041899">
    <property type="entry name" value="MAGE_WH2"/>
</dbReference>
<dbReference type="InterPro" id="IPR002190">
    <property type="entry name" value="MHD_dom"/>
</dbReference>
<dbReference type="PANTHER" id="PTHR11736:SF84">
    <property type="entry name" value="MELANOMA-ASSOCIATED ANTIGEN C2"/>
    <property type="match status" value="1"/>
</dbReference>
<dbReference type="PANTHER" id="PTHR11736">
    <property type="entry name" value="MELANOMA-ASSOCIATED ANTIGEN MAGE ANTIGEN"/>
    <property type="match status" value="1"/>
</dbReference>
<dbReference type="Pfam" id="PF01454">
    <property type="entry name" value="MAGE"/>
    <property type="match status" value="1"/>
</dbReference>
<dbReference type="SMART" id="SM01373">
    <property type="entry name" value="MAGE"/>
    <property type="match status" value="1"/>
</dbReference>
<dbReference type="PROSITE" id="PS50838">
    <property type="entry name" value="MAGE"/>
    <property type="match status" value="1"/>
</dbReference>
<feature type="chain" id="PRO_0000156721" description="Melanoma-associated antigen C2">
    <location>
        <begin position="1"/>
        <end position="373"/>
    </location>
</feature>
<feature type="domain" description="MAGE" evidence="1">
    <location>
        <begin position="141"/>
        <end position="336"/>
    </location>
</feature>
<feature type="region of interest" description="Disordered" evidence="2">
    <location>
        <begin position="1"/>
        <end position="102"/>
    </location>
</feature>
<feature type="region of interest" description="Interaction with TRIM28">
    <location>
        <begin position="135"/>
        <end position="373"/>
    </location>
</feature>
<feature type="compositionally biased region" description="Low complexity" evidence="2">
    <location>
        <begin position="40"/>
        <end position="60"/>
    </location>
</feature>
<feature type="compositionally biased region" description="Pro residues" evidence="2">
    <location>
        <begin position="85"/>
        <end position="94"/>
    </location>
</feature>
<feature type="sequence variant" id="VAR_036583" description="In a breast cancer sample; somatic mutation." evidence="5">
    <original>G</original>
    <variation>C</variation>
    <location>
        <position position="6"/>
    </location>
</feature>
<feature type="mutagenesis site" description="Decreases interaction with TRIM28, abolishes in vitro ubiquitination of TP53." evidence="7">
    <original>LL</original>
    <variation>AA</variation>
    <location>
        <begin position="152"/>
        <end position="153"/>
    </location>
</feature>
<feature type="sequence conflict" description="In Ref. 5; AAH13318." evidence="8" ref="5">
    <original>V</original>
    <variation>A</variation>
    <location>
        <position position="12"/>
    </location>
</feature>
<feature type="sequence conflict" description="In Ref. 1; AAF34816." evidence="8" ref="1">
    <original>M</original>
    <variation>T</variation>
    <location>
        <position position="189"/>
    </location>
</feature>
<feature type="sequence conflict" description="In Ref. 1; AAF34816/AAF34817." evidence="8" ref="1">
    <original>K</original>
    <variation>E</variation>
    <location>
        <position position="334"/>
    </location>
</feature>
<name>MAGC2_HUMAN</name>